<comment type="catalytic activity">
    <reaction>
        <text>D-erythro-1-(imidazol-4-yl)glycerol 3-phosphate = 3-(imidazol-4-yl)-2-oxopropyl phosphate + H2O</text>
        <dbReference type="Rhea" id="RHEA:11040"/>
        <dbReference type="ChEBI" id="CHEBI:15377"/>
        <dbReference type="ChEBI" id="CHEBI:57766"/>
        <dbReference type="ChEBI" id="CHEBI:58278"/>
        <dbReference type="EC" id="4.2.1.19"/>
    </reaction>
</comment>
<comment type="pathway">
    <text>Amino-acid biosynthesis; L-histidine biosynthesis; L-histidine from 5-phospho-alpha-D-ribose 1-diphosphate: step 6/9.</text>
</comment>
<comment type="similarity">
    <text evidence="1">Belongs to the imidazoleglycerol-phosphate dehydratase family.</text>
</comment>
<sequence length="220" mass="23675">MSETQRAFVKRITHETQVQIALALNGGPLEIGQSILGGAKTTVAHQASSSQVINVQTGVGFLDHMIHALAKHSGWSLIVECVGDLHIDDHHTTEDCGLALGQALREAIGQVRGVKRFGTGFAPLDEALSRAVVDLSNRPYAVVDLGLRREKIGDLSTEMIPHFLQSFAESARVTLHVDCLRGTNDHHRSESAFKAVAVALRDALTRTGTDDVPSTKGVLM</sequence>
<protein>
    <recommendedName>
        <fullName>Imidazoleglycerol-phosphate dehydratase</fullName>
        <shortName>IGPD</shortName>
        <ecNumber>4.2.1.19</ecNumber>
    </recommendedName>
</protein>
<evidence type="ECO:0000305" key="1"/>
<proteinExistence type="inferred from homology"/>
<reference key="1">
    <citation type="journal article" date="2004" name="Science">
        <title>The Ashbya gossypii genome as a tool for mapping the ancient Saccharomyces cerevisiae genome.</title>
        <authorList>
            <person name="Dietrich F.S."/>
            <person name="Voegeli S."/>
            <person name="Brachat S."/>
            <person name="Lerch A."/>
            <person name="Gates K."/>
            <person name="Steiner S."/>
            <person name="Mohr C."/>
            <person name="Poehlmann R."/>
            <person name="Luedi P."/>
            <person name="Choi S."/>
            <person name="Wing R.A."/>
            <person name="Flavier A."/>
            <person name="Gaffney T.D."/>
            <person name="Philippsen P."/>
        </authorList>
    </citation>
    <scope>NUCLEOTIDE SEQUENCE [LARGE SCALE GENOMIC DNA]</scope>
    <source>
        <strain>ATCC 10895 / CBS 109.51 / FGSC 9923 / NRRL Y-1056</strain>
    </source>
</reference>
<reference key="2">
    <citation type="journal article" date="2013" name="G3 (Bethesda)">
        <title>Genomes of Ashbya fungi isolated from insects reveal four mating-type loci, numerous translocations, lack of transposons, and distinct gene duplications.</title>
        <authorList>
            <person name="Dietrich F.S."/>
            <person name="Voegeli S."/>
            <person name="Kuo S."/>
            <person name="Philippsen P."/>
        </authorList>
    </citation>
    <scope>GENOME REANNOTATION</scope>
    <scope>SEQUENCE REVISION TO 6; 12-21 AND 29</scope>
    <source>
        <strain>ATCC 10895 / CBS 109.51 / FGSC 9923 / NRRL Y-1056</strain>
    </source>
</reference>
<accession>Q75B47</accession>
<organism>
    <name type="scientific">Eremothecium gossypii (strain ATCC 10895 / CBS 109.51 / FGSC 9923 / NRRL Y-1056)</name>
    <name type="common">Yeast</name>
    <name type="synonym">Ashbya gossypii</name>
    <dbReference type="NCBI Taxonomy" id="284811"/>
    <lineage>
        <taxon>Eukaryota</taxon>
        <taxon>Fungi</taxon>
        <taxon>Dikarya</taxon>
        <taxon>Ascomycota</taxon>
        <taxon>Saccharomycotina</taxon>
        <taxon>Saccharomycetes</taxon>
        <taxon>Saccharomycetales</taxon>
        <taxon>Saccharomycetaceae</taxon>
        <taxon>Eremothecium</taxon>
    </lineage>
</organism>
<gene>
    <name type="primary">HIS3</name>
    <name type="ordered locus">ADL270C</name>
</gene>
<name>HIS7_EREGS</name>
<keyword id="KW-0028">Amino-acid biosynthesis</keyword>
<keyword id="KW-0368">Histidine biosynthesis</keyword>
<keyword id="KW-0456">Lyase</keyword>
<keyword id="KW-1185">Reference proteome</keyword>
<dbReference type="EC" id="4.2.1.19"/>
<dbReference type="EMBL" id="AE016817">
    <property type="protein sequence ID" value="AAS51650.2"/>
    <property type="molecule type" value="Genomic_DNA"/>
</dbReference>
<dbReference type="RefSeq" id="NP_983826.2">
    <property type="nucleotide sequence ID" value="NM_209179.2"/>
</dbReference>
<dbReference type="SMR" id="Q75B47"/>
<dbReference type="FunCoup" id="Q75B47">
    <property type="interactions" value="261"/>
</dbReference>
<dbReference type="STRING" id="284811.Q75B47"/>
<dbReference type="EnsemblFungi" id="AAS51650">
    <property type="protein sequence ID" value="AAS51650"/>
    <property type="gene ID" value="AGOS_ADL270C"/>
</dbReference>
<dbReference type="GeneID" id="4619961"/>
<dbReference type="KEGG" id="ago:AGOS_ADL270C"/>
<dbReference type="eggNOG" id="KOG3143">
    <property type="taxonomic scope" value="Eukaryota"/>
</dbReference>
<dbReference type="HOGENOM" id="CLU_044308_3_0_1"/>
<dbReference type="InParanoid" id="Q75B47"/>
<dbReference type="OMA" id="GIPFFDH"/>
<dbReference type="OrthoDB" id="447729at2759"/>
<dbReference type="UniPathway" id="UPA00031">
    <property type="reaction ID" value="UER00011"/>
</dbReference>
<dbReference type="Proteomes" id="UP000000591">
    <property type="component" value="Chromosome IV"/>
</dbReference>
<dbReference type="GO" id="GO:0004424">
    <property type="term" value="F:imidazoleglycerol-phosphate dehydratase activity"/>
    <property type="evidence" value="ECO:0000318"/>
    <property type="project" value="GO_Central"/>
</dbReference>
<dbReference type="GO" id="GO:0000105">
    <property type="term" value="P:L-histidine biosynthetic process"/>
    <property type="evidence" value="ECO:0000318"/>
    <property type="project" value="GO_Central"/>
</dbReference>
<dbReference type="CDD" id="cd07914">
    <property type="entry name" value="IGPD"/>
    <property type="match status" value="1"/>
</dbReference>
<dbReference type="FunFam" id="3.30.230.40:FF:000005">
    <property type="entry name" value="Imidazoleglycerol-phosphate dehydratase"/>
    <property type="match status" value="1"/>
</dbReference>
<dbReference type="FunFam" id="3.30.230.40:FF:000001">
    <property type="entry name" value="Imidazoleglycerol-phosphate dehydratase HisB"/>
    <property type="match status" value="1"/>
</dbReference>
<dbReference type="Gene3D" id="3.30.230.40">
    <property type="entry name" value="Imidazole glycerol phosphate dehydratase, domain 1"/>
    <property type="match status" value="2"/>
</dbReference>
<dbReference type="HAMAP" id="MF_00076">
    <property type="entry name" value="HisB"/>
    <property type="match status" value="1"/>
</dbReference>
<dbReference type="InterPro" id="IPR038494">
    <property type="entry name" value="IGPD_sf"/>
</dbReference>
<dbReference type="InterPro" id="IPR000807">
    <property type="entry name" value="ImidazoleglycerolP_deHydtase"/>
</dbReference>
<dbReference type="InterPro" id="IPR020565">
    <property type="entry name" value="ImidazoleglycerP_deHydtase_CS"/>
</dbReference>
<dbReference type="InterPro" id="IPR020568">
    <property type="entry name" value="Ribosomal_Su5_D2-typ_SF"/>
</dbReference>
<dbReference type="NCBIfam" id="NF002114">
    <property type="entry name" value="PRK00951.2-4"/>
    <property type="match status" value="1"/>
</dbReference>
<dbReference type="PANTHER" id="PTHR23133:SF2">
    <property type="entry name" value="IMIDAZOLEGLYCEROL-PHOSPHATE DEHYDRATASE"/>
    <property type="match status" value="1"/>
</dbReference>
<dbReference type="PANTHER" id="PTHR23133">
    <property type="entry name" value="IMIDAZOLEGLYCEROL-PHOSPHATE DEHYDRATASE HIS7"/>
    <property type="match status" value="1"/>
</dbReference>
<dbReference type="Pfam" id="PF00475">
    <property type="entry name" value="IGPD"/>
    <property type="match status" value="1"/>
</dbReference>
<dbReference type="SUPFAM" id="SSF54211">
    <property type="entry name" value="Ribosomal protein S5 domain 2-like"/>
    <property type="match status" value="2"/>
</dbReference>
<dbReference type="PROSITE" id="PS00954">
    <property type="entry name" value="IGP_DEHYDRATASE_1"/>
    <property type="match status" value="1"/>
</dbReference>
<dbReference type="PROSITE" id="PS00955">
    <property type="entry name" value="IGP_DEHYDRATASE_2"/>
    <property type="match status" value="1"/>
</dbReference>
<feature type="chain" id="PRO_0000158233" description="Imidazoleglycerol-phosphate dehydratase">
    <location>
        <begin position="1"/>
        <end position="220"/>
    </location>
</feature>